<gene>
    <name type="primary">PKIA</name>
    <name type="synonym">PRKACN1</name>
</gene>
<evidence type="ECO:0000250" key="1">
    <source>
        <dbReference type="UniProtKB" id="P61925"/>
    </source>
</evidence>
<evidence type="ECO:0000256" key="2">
    <source>
        <dbReference type="SAM" id="MobiDB-lite"/>
    </source>
</evidence>
<evidence type="ECO:0000269" key="3">
    <source>
    </source>
</evidence>
<evidence type="ECO:0000305" key="4"/>
<evidence type="ECO:0007829" key="5">
    <source>
        <dbReference type="PDB" id="3DND"/>
    </source>
</evidence>
<evidence type="ECO:0007829" key="6">
    <source>
        <dbReference type="PDB" id="4XW4"/>
    </source>
</evidence>
<accession>P61926</accession>
<accession>P04541</accession>
<comment type="function">
    <text>Extremely potent competitive inhibitor of cAMP-dependent protein kinase activity, this protein interacts with the catalytic subunit of the enzyme after the cAMP-induced dissociation of its regulatory chains.</text>
</comment>
<comment type="miscellaneous">
    <text>The inhibitory site contains regions very similar to the hinge regions (sites that directly interact with the enzyme active site) and 'pseudosubstrate site' of the regulatory chains; but, unlike these chains, PKI does not contain cAMP-binding sites. The arginine residues within the inhibitory site are essential for inhibition and recognition of the enzyme active site.</text>
</comment>
<comment type="similarity">
    <text evidence="4">Belongs to the PKI family.</text>
</comment>
<organism>
    <name type="scientific">Oryctolagus cuniculus</name>
    <name type="common">Rabbit</name>
    <dbReference type="NCBI Taxonomy" id="9986"/>
    <lineage>
        <taxon>Eukaryota</taxon>
        <taxon>Metazoa</taxon>
        <taxon>Chordata</taxon>
        <taxon>Craniata</taxon>
        <taxon>Vertebrata</taxon>
        <taxon>Euteleostomi</taxon>
        <taxon>Mammalia</taxon>
        <taxon>Eutheria</taxon>
        <taxon>Euarchontoglires</taxon>
        <taxon>Glires</taxon>
        <taxon>Lagomorpha</taxon>
        <taxon>Leporidae</taxon>
        <taxon>Oryctolagus</taxon>
    </lineage>
</organism>
<protein>
    <recommendedName>
        <fullName>cAMP-dependent protein kinase inhibitor alpha</fullName>
        <shortName>PKI-alpha</shortName>
    </recommendedName>
    <alternativeName>
        <fullName>cAMP-dependent protein kinase inhibitor, muscle/brain isoform</fullName>
    </alternativeName>
</protein>
<sequence>MTDVETTYADFIASGRTGRRNAIHDILVSSASGNSNELALKLAGLDINKTEGEEDAQRSSTEQSGEAQGEAAKSES</sequence>
<dbReference type="PIR" id="A01340">
    <property type="entry name" value="OKRBCI"/>
</dbReference>
<dbReference type="RefSeq" id="XP_008253905.1">
    <property type="nucleotide sequence ID" value="XM_008255683.4"/>
</dbReference>
<dbReference type="PDB" id="1CDK">
    <property type="method" value="X-ray"/>
    <property type="resolution" value="2.00 A"/>
    <property type="chains" value="I/J=6-25"/>
</dbReference>
<dbReference type="PDB" id="1CTP">
    <property type="method" value="X-ray"/>
    <property type="resolution" value="2.90 A"/>
    <property type="chains" value="I=6-25"/>
</dbReference>
<dbReference type="PDB" id="1FMO">
    <property type="method" value="X-ray"/>
    <property type="resolution" value="2.20 A"/>
    <property type="chains" value="I=6-25"/>
</dbReference>
<dbReference type="PDB" id="1JBP">
    <property type="method" value="X-ray"/>
    <property type="resolution" value="2.20 A"/>
    <property type="chains" value="S=6-25"/>
</dbReference>
<dbReference type="PDB" id="1Q8W">
    <property type="method" value="X-ray"/>
    <property type="resolution" value="2.20 A"/>
    <property type="chains" value="B=6-25"/>
</dbReference>
<dbReference type="PDB" id="1SMH">
    <property type="method" value="X-ray"/>
    <property type="resolution" value="2.04 A"/>
    <property type="chains" value="B=6-25"/>
</dbReference>
<dbReference type="PDB" id="1STC">
    <property type="method" value="X-ray"/>
    <property type="resolution" value="2.30 A"/>
    <property type="chains" value="I=6-25"/>
</dbReference>
<dbReference type="PDB" id="1SVE">
    <property type="method" value="X-ray"/>
    <property type="resolution" value="2.49 A"/>
    <property type="chains" value="B=6-25"/>
</dbReference>
<dbReference type="PDB" id="1SVG">
    <property type="method" value="X-ray"/>
    <property type="resolution" value="2.02 A"/>
    <property type="chains" value="B=6-25"/>
</dbReference>
<dbReference type="PDB" id="2ERZ">
    <property type="method" value="X-ray"/>
    <property type="resolution" value="2.20 A"/>
    <property type="chains" value="I=6-25"/>
</dbReference>
<dbReference type="PDB" id="2F7Z">
    <property type="method" value="X-ray"/>
    <property type="resolution" value="3.00 A"/>
    <property type="chains" value="I=6-25"/>
</dbReference>
<dbReference type="PDB" id="2GFC">
    <property type="method" value="X-ray"/>
    <property type="resolution" value="1.87 A"/>
    <property type="chains" value="I=6-25"/>
</dbReference>
<dbReference type="PDB" id="2GNH">
    <property type="method" value="X-ray"/>
    <property type="resolution" value="2.05 A"/>
    <property type="chains" value="I=6-25"/>
</dbReference>
<dbReference type="PDB" id="2GNL">
    <property type="method" value="X-ray"/>
    <property type="resolution" value="2.60 A"/>
    <property type="chains" value="I=6-25"/>
</dbReference>
<dbReference type="PDB" id="3DND">
    <property type="method" value="X-ray"/>
    <property type="resolution" value="2.26 A"/>
    <property type="chains" value="I=6-25"/>
</dbReference>
<dbReference type="PDB" id="3DNE">
    <property type="method" value="X-ray"/>
    <property type="resolution" value="2.00 A"/>
    <property type="chains" value="I=6-25"/>
</dbReference>
<dbReference type="PDB" id="4XW4">
    <property type="method" value="X-ray"/>
    <property type="resolution" value="1.82 A"/>
    <property type="chains" value="B=6-25"/>
</dbReference>
<dbReference type="PDB" id="4XW5">
    <property type="method" value="X-ray"/>
    <property type="resolution" value="1.95 A"/>
    <property type="chains" value="B=6-25"/>
</dbReference>
<dbReference type="PDB" id="4XW6">
    <property type="method" value="X-ray"/>
    <property type="resolution" value="1.90 A"/>
    <property type="chains" value="B=6-25"/>
</dbReference>
<dbReference type="PDB" id="4YXS">
    <property type="method" value="X-ray"/>
    <property type="resolution" value="2.11 A"/>
    <property type="chains" value="I=6-25"/>
</dbReference>
<dbReference type="PDB" id="5UZK">
    <property type="method" value="X-ray"/>
    <property type="resolution" value="2.30 A"/>
    <property type="chains" value="I=6-23"/>
</dbReference>
<dbReference type="PDBsum" id="1CDK"/>
<dbReference type="PDBsum" id="1CTP"/>
<dbReference type="PDBsum" id="1FMO"/>
<dbReference type="PDBsum" id="1JBP"/>
<dbReference type="PDBsum" id="1Q8W"/>
<dbReference type="PDBsum" id="1SMH"/>
<dbReference type="PDBsum" id="1STC"/>
<dbReference type="PDBsum" id="1SVE"/>
<dbReference type="PDBsum" id="1SVG"/>
<dbReference type="PDBsum" id="2ERZ"/>
<dbReference type="PDBsum" id="2F7Z"/>
<dbReference type="PDBsum" id="2GFC"/>
<dbReference type="PDBsum" id="2GNH"/>
<dbReference type="PDBsum" id="2GNL"/>
<dbReference type="PDBsum" id="3DND"/>
<dbReference type="PDBsum" id="3DNE"/>
<dbReference type="PDBsum" id="4XW4"/>
<dbReference type="PDBsum" id="4XW5"/>
<dbReference type="PDBsum" id="4XW6"/>
<dbReference type="PDBsum" id="4YXS"/>
<dbReference type="PDBsum" id="5UZK"/>
<dbReference type="BMRB" id="P61926"/>
<dbReference type="SMR" id="P61926"/>
<dbReference type="FunCoup" id="P61926">
    <property type="interactions" value="1156"/>
</dbReference>
<dbReference type="STRING" id="9986.ENSOCUP00000018622"/>
<dbReference type="iPTMnet" id="P61926"/>
<dbReference type="PaxDb" id="9986-ENSOCUP00000018622"/>
<dbReference type="Ensembl" id="ENSOCUT00000026858.3">
    <property type="protein sequence ID" value="ENSOCUP00000018622.3"/>
    <property type="gene ID" value="ENSOCUG00000021115.3"/>
</dbReference>
<dbReference type="GeneID" id="100343293"/>
<dbReference type="KEGG" id="ocu:100343293"/>
<dbReference type="CTD" id="5569"/>
<dbReference type="eggNOG" id="ENOG502S6JP">
    <property type="taxonomic scope" value="Eukaryota"/>
</dbReference>
<dbReference type="GeneTree" id="ENSGT00530000064276"/>
<dbReference type="InParanoid" id="P61926"/>
<dbReference type="OrthoDB" id="9934738at2759"/>
<dbReference type="TreeFam" id="TF330809"/>
<dbReference type="EvolutionaryTrace" id="P61926"/>
<dbReference type="Proteomes" id="UP000001811">
    <property type="component" value="Chromosome 3"/>
</dbReference>
<dbReference type="Bgee" id="ENSOCUG00000021115">
    <property type="expression patterns" value="Expressed in skeletal muscle tissue and 16 other cell types or tissues"/>
</dbReference>
<dbReference type="ExpressionAtlas" id="P61926">
    <property type="expression patterns" value="baseline"/>
</dbReference>
<dbReference type="GO" id="GO:0005737">
    <property type="term" value="C:cytoplasm"/>
    <property type="evidence" value="ECO:0007669"/>
    <property type="project" value="Ensembl"/>
</dbReference>
<dbReference type="GO" id="GO:0005634">
    <property type="term" value="C:nucleus"/>
    <property type="evidence" value="ECO:0007669"/>
    <property type="project" value="Ensembl"/>
</dbReference>
<dbReference type="GO" id="GO:0004862">
    <property type="term" value="F:cAMP-dependent protein kinase inhibitor activity"/>
    <property type="evidence" value="ECO:0000314"/>
    <property type="project" value="CAFA"/>
</dbReference>
<dbReference type="GO" id="GO:0060090">
    <property type="term" value="F:molecular adaptor activity"/>
    <property type="evidence" value="ECO:0000353"/>
    <property type="project" value="DisProt"/>
</dbReference>
<dbReference type="GO" id="GO:0140678">
    <property type="term" value="F:molecular function inhibitor activity"/>
    <property type="evidence" value="ECO:0000314"/>
    <property type="project" value="DisProt"/>
</dbReference>
<dbReference type="GO" id="GO:0034236">
    <property type="term" value="F:protein kinase A catalytic subunit binding"/>
    <property type="evidence" value="ECO:0000353"/>
    <property type="project" value="CAFA"/>
</dbReference>
<dbReference type="GO" id="GO:2000480">
    <property type="term" value="P:negative regulation of cAMP-dependent protein kinase activity"/>
    <property type="evidence" value="ECO:0000314"/>
    <property type="project" value="CAFA"/>
</dbReference>
<dbReference type="GO" id="GO:0141162">
    <property type="term" value="P:negative regulation of cAMP/PKA signal transduction"/>
    <property type="evidence" value="ECO:0007669"/>
    <property type="project" value="Ensembl"/>
</dbReference>
<dbReference type="GO" id="GO:0042308">
    <property type="term" value="P:negative regulation of protein import into nucleus"/>
    <property type="evidence" value="ECO:0007669"/>
    <property type="project" value="Ensembl"/>
</dbReference>
<dbReference type="GO" id="GO:0000122">
    <property type="term" value="P:negative regulation of transcription by RNA polymerase II"/>
    <property type="evidence" value="ECO:0007669"/>
    <property type="project" value="Ensembl"/>
</dbReference>
<dbReference type="GO" id="GO:0010389">
    <property type="term" value="P:regulation of G2/M transition of mitotic cell cycle"/>
    <property type="evidence" value="ECO:0007669"/>
    <property type="project" value="Ensembl"/>
</dbReference>
<dbReference type="DisProt" id="DP00015"/>
<dbReference type="IDEAL" id="IID50121"/>
<dbReference type="InterPro" id="IPR004171">
    <property type="entry name" value="cAMP_dep_PKI"/>
</dbReference>
<dbReference type="PANTHER" id="PTHR15416">
    <property type="entry name" value="CAMP-DEPENDENT PROTEIN KINASE INHIBITOR/PKI"/>
    <property type="match status" value="1"/>
</dbReference>
<dbReference type="Pfam" id="PF02827">
    <property type="entry name" value="PKI"/>
    <property type="match status" value="1"/>
</dbReference>
<dbReference type="PIRSF" id="PIRSF001667">
    <property type="entry name" value="PKI"/>
    <property type="match status" value="1"/>
</dbReference>
<proteinExistence type="evidence at protein level"/>
<name>IPKA_RABIT</name>
<reference key="1">
    <citation type="journal article" date="1985" name="Proc. Natl. Acad. Sci. U.S.A.">
        <title>Amino acid sequence of the heat-stable inhibitor of the cAMP-dependent protein kinase from rabbit skeletal muscle.</title>
        <authorList>
            <person name="Scott J.D."/>
            <person name="Fischer E.H."/>
            <person name="Takio K."/>
            <person name="Demaille J.G."/>
            <person name="Krebs E.G."/>
        </authorList>
    </citation>
    <scope>PROTEIN SEQUENCE OF 2-76</scope>
    <source>
        <tissue>Skeletal muscle</tissue>
    </source>
</reference>
<reference key="2">
    <citation type="journal article" date="1985" name="Proc. Natl. Acad. Sci. U.S.A.">
        <title>Identification of an inhibitory region of the heat-stable protein inhibitor of the cAMP-dependent protein kinase.</title>
        <authorList>
            <person name="Scott J.D."/>
            <person name="Fischer E.H."/>
            <person name="Demaille J.G."/>
            <person name="Krebs E.G."/>
        </authorList>
    </citation>
    <scope>INHIBITORY SITE</scope>
</reference>
<reference key="3">
    <citation type="journal article" date="1991" name="Science">
        <title>Structure of a peptide inhibitor bound to the catalytic subunit of cyclic adenosine monophosphate-dependent protein kinase.</title>
        <authorList>
            <person name="Knighton D.R."/>
            <person name="Zheng J."/>
            <person name="ten Eyck L.F."/>
            <person name="Xuong N.-H."/>
            <person name="Taylor S.S."/>
            <person name="Sowadski J.M."/>
        </authorList>
    </citation>
    <scope>X-RAY CRYSTALLOGRAPHY (2.7 ANGSTROMS) OF 6-25 IN COMPLEX WITH PRKACA</scope>
</reference>
<reference key="4">
    <citation type="journal article" date="1997" name="Biochemistry">
        <title>Crystal structure of a polyhistidine-tagged recombinant catalytic subunit of cAMP-dependent protein kinase complexed with the peptide inhibitor PKI(5-24) and adenosine.</title>
        <authorList>
            <person name="Narayana N."/>
            <person name="Cox S."/>
            <person name="Shaltiel S."/>
            <person name="Taylor S.S."/>
            <person name="Xuong N."/>
        </authorList>
    </citation>
    <scope>X-RAY CRYSTALLOGRAPHY (2.2 ANGSTROMS) OF 6-25 IN COMPLEX WITH PRKACA</scope>
</reference>
<feature type="initiator methionine" description="Removed" evidence="1 3">
    <location>
        <position position="1"/>
    </location>
</feature>
<feature type="chain" id="PRO_0000154535" description="cAMP-dependent protein kinase inhibitor alpha">
    <location>
        <begin position="2"/>
        <end position="76"/>
    </location>
</feature>
<feature type="region of interest" description="Disordered" evidence="2">
    <location>
        <begin position="49"/>
        <end position="76"/>
    </location>
</feature>
<feature type="site" description="Important for inhibition">
    <location>
        <position position="16"/>
    </location>
</feature>
<feature type="site" description="Important for inhibition">
    <location>
        <position position="19"/>
    </location>
</feature>
<feature type="site" description="Important for inhibition">
    <location>
        <position position="20"/>
    </location>
</feature>
<feature type="modified residue" description="Blocked amino end (Thr); alternate">
    <location>
        <position position="2"/>
    </location>
</feature>
<feature type="modified residue" description="N-acetylthreonine; alternate" evidence="1">
    <location>
        <position position="2"/>
    </location>
</feature>
<feature type="helix" evidence="6">
    <location>
        <begin position="7"/>
        <end position="12"/>
    </location>
</feature>
<feature type="strand" evidence="5">
    <location>
        <begin position="23"/>
        <end position="25"/>
    </location>
</feature>
<keyword id="KW-0002">3D-structure</keyword>
<keyword id="KW-0007">Acetylation</keyword>
<keyword id="KW-0903">Direct protein sequencing</keyword>
<keyword id="KW-0649">Protein kinase inhibitor</keyword>
<keyword id="KW-1185">Reference proteome</keyword>